<feature type="chain" id="PRO_0000153933" description="Beta-amylase">
    <location>
        <begin position="1"/>
        <end position="535"/>
    </location>
</feature>
<feature type="repeat" description="1">
    <location>
        <begin position="489"/>
        <end position="499"/>
    </location>
</feature>
<feature type="repeat" description="2">
    <location>
        <begin position="500"/>
        <end position="510"/>
    </location>
</feature>
<feature type="repeat" description="3">
    <location>
        <begin position="511"/>
        <end position="521"/>
    </location>
</feature>
<feature type="repeat" description="4; approximate">
    <location>
        <begin position="522"/>
        <end position="532"/>
    </location>
</feature>
<feature type="region of interest" description="4 X 11 AA tandem repeats">
    <location>
        <begin position="489"/>
        <end position="532"/>
    </location>
</feature>
<feature type="region of interest" description="Disordered" evidence="3">
    <location>
        <begin position="513"/>
        <end position="535"/>
    </location>
</feature>
<feature type="active site" description="Proton donor" evidence="2">
    <location>
        <position position="184"/>
    </location>
</feature>
<feature type="active site" description="Proton acceptor" evidence="1">
    <location>
        <position position="378"/>
    </location>
</feature>
<feature type="binding site" evidence="1">
    <location>
        <position position="51"/>
    </location>
    <ligand>
        <name>substrate</name>
    </ligand>
</feature>
<feature type="binding site" evidence="1">
    <location>
        <position position="91"/>
    </location>
    <ligand>
        <name>substrate</name>
    </ligand>
</feature>
<feature type="binding site" evidence="1">
    <location>
        <position position="99"/>
    </location>
    <ligand>
        <name>substrate</name>
    </ligand>
</feature>
<feature type="binding site" evidence="1">
    <location>
        <position position="293"/>
    </location>
    <ligand>
        <name>substrate</name>
    </ligand>
</feature>
<feature type="binding site" evidence="1">
    <location>
        <position position="298"/>
    </location>
    <ligand>
        <name>substrate</name>
    </ligand>
</feature>
<feature type="binding site" evidence="1">
    <location>
        <position position="340"/>
    </location>
    <ligand>
        <name>substrate</name>
    </ligand>
</feature>
<feature type="binding site" evidence="1">
    <location>
        <begin position="379"/>
        <end position="380"/>
    </location>
    <ligand>
        <name>substrate</name>
    </ligand>
</feature>
<feature type="binding site" evidence="1">
    <location>
        <position position="418"/>
    </location>
    <ligand>
        <name>substrate</name>
    </ligand>
</feature>
<feature type="sequence conflict" description="In Ref. 2; BAA08741 and 3; BAA04815." evidence="4" ref="2 3">
    <original>V</original>
    <variation>A</variation>
    <location>
        <position position="233"/>
    </location>
</feature>
<feature type="sequence conflict" description="In Ref. 2; BAA08741 and 3; BAA04815." evidence="4" ref="2 3">
    <original>L</original>
    <variation>S</variation>
    <location>
        <position position="347"/>
    </location>
</feature>
<feature type="sequence conflict" description="In Ref. 2; BAA08741 and 3; BAA04815." evidence="4" ref="2 3">
    <original>I</original>
    <variation>M</variation>
    <location>
        <position position="527"/>
    </location>
</feature>
<feature type="helix" evidence="7">
    <location>
        <begin position="6"/>
        <end position="8"/>
    </location>
</feature>
<feature type="strand" evidence="7">
    <location>
        <begin position="11"/>
        <end position="15"/>
    </location>
</feature>
<feature type="helix" evidence="7">
    <location>
        <begin position="30"/>
        <end position="42"/>
    </location>
</feature>
<feature type="strand" evidence="7">
    <location>
        <begin position="47"/>
        <end position="53"/>
    </location>
</feature>
<feature type="helix" evidence="7">
    <location>
        <begin position="54"/>
        <end position="57"/>
    </location>
</feature>
<feature type="helix" evidence="7">
    <location>
        <begin position="68"/>
        <end position="79"/>
    </location>
</feature>
<feature type="strand" evidence="7">
    <location>
        <begin position="83"/>
        <end position="89"/>
    </location>
</feature>
<feature type="strand" evidence="8">
    <location>
        <begin position="93"/>
        <end position="96"/>
    </location>
</feature>
<feature type="helix" evidence="7">
    <location>
        <begin position="107"/>
        <end position="115"/>
    </location>
</feature>
<feature type="helix" evidence="7">
    <location>
        <begin position="117"/>
        <end position="119"/>
    </location>
</feature>
<feature type="strand" evidence="7">
    <location>
        <begin position="120"/>
        <end position="122"/>
    </location>
</feature>
<feature type="strand" evidence="7">
    <location>
        <begin position="128"/>
        <end position="133"/>
    </location>
</feature>
<feature type="helix" evidence="7">
    <location>
        <begin position="135"/>
        <end position="137"/>
    </location>
</feature>
<feature type="turn" evidence="5">
    <location>
        <begin position="142"/>
        <end position="144"/>
    </location>
</feature>
<feature type="helix" evidence="7">
    <location>
        <begin position="148"/>
        <end position="168"/>
    </location>
</feature>
<feature type="strand" evidence="7">
    <location>
        <begin position="172"/>
        <end position="177"/>
    </location>
</feature>
<feature type="helix" evidence="7">
    <location>
        <begin position="181"/>
        <end position="183"/>
    </location>
</feature>
<feature type="strand" evidence="6">
    <location>
        <begin position="184"/>
        <end position="186"/>
    </location>
</feature>
<feature type="turn" evidence="7">
    <location>
        <begin position="193"/>
        <end position="195"/>
    </location>
</feature>
<feature type="helix" evidence="7">
    <location>
        <begin position="209"/>
        <end position="221"/>
    </location>
</feature>
<feature type="helix" evidence="7">
    <location>
        <begin position="240"/>
        <end position="242"/>
    </location>
</feature>
<feature type="turn" evidence="7">
    <location>
        <begin position="244"/>
        <end position="246"/>
    </location>
</feature>
<feature type="helix" evidence="7">
    <location>
        <begin position="251"/>
        <end position="253"/>
    </location>
</feature>
<feature type="helix" evidence="7">
    <location>
        <begin position="255"/>
        <end position="283"/>
    </location>
</feature>
<feature type="strand" evidence="7">
    <location>
        <begin position="289"/>
        <end position="293"/>
    </location>
</feature>
<feature type="turn" evidence="7">
    <location>
        <begin position="299"/>
        <end position="302"/>
    </location>
</feature>
<feature type="helix" evidence="7">
    <location>
        <begin position="307"/>
        <end position="312"/>
    </location>
</feature>
<feature type="strand" evidence="5">
    <location>
        <begin position="318"/>
        <end position="320"/>
    </location>
</feature>
<feature type="helix" evidence="7">
    <location>
        <begin position="324"/>
        <end position="331"/>
    </location>
</feature>
<feature type="turn" evidence="7">
    <location>
        <begin position="332"/>
        <end position="334"/>
    </location>
</feature>
<feature type="strand" evidence="7">
    <location>
        <begin position="336"/>
        <end position="339"/>
    </location>
</feature>
<feature type="helix" evidence="7">
    <location>
        <begin position="346"/>
        <end position="348"/>
    </location>
</feature>
<feature type="helix" evidence="7">
    <location>
        <begin position="351"/>
        <end position="353"/>
    </location>
</feature>
<feature type="helix" evidence="7">
    <location>
        <begin position="357"/>
        <end position="370"/>
    </location>
</feature>
<feature type="strand" evidence="7">
    <location>
        <begin position="375"/>
        <end position="378"/>
    </location>
</feature>
<feature type="helix" evidence="7">
    <location>
        <begin position="386"/>
        <end position="396"/>
    </location>
</feature>
<feature type="strand" evidence="7">
    <location>
        <begin position="403"/>
        <end position="405"/>
    </location>
</feature>
<feature type="strand" evidence="7">
    <location>
        <begin position="412"/>
        <end position="417"/>
    </location>
</feature>
<feature type="turn" evidence="7">
    <location>
        <begin position="421"/>
        <end position="424"/>
    </location>
</feature>
<feature type="helix" evidence="7">
    <location>
        <begin position="426"/>
        <end position="439"/>
    </location>
</feature>
<feature type="turn" evidence="7">
    <location>
        <begin position="440"/>
        <end position="442"/>
    </location>
</feature>
<feature type="strand" evidence="5">
    <location>
        <begin position="447"/>
        <end position="450"/>
    </location>
</feature>
<feature type="helix" evidence="7">
    <location>
        <begin position="464"/>
        <end position="468"/>
    </location>
</feature>
<feature type="helix" evidence="7">
    <location>
        <begin position="469"/>
        <end position="471"/>
    </location>
</feature>
<sequence>MEVNVKGNYVQVYVMLPLDAVSVNNRFEKGDELRAQLRKLVEAGVDGVMVDVWWGLVEGKGPKAYDWSAYKQLFELVQKAGLKLQAIMSFHQCGGNVGDAVNIPIPQWVRDVGTRDPDIFYTDGHGTRNIEYLTLGVDNQPLFHGRSAVQMYADYMTSFRENMKDFLDAGVIVDIEVGLGPAGEMRYPSYPQSHGWSFPGIGEFICYDKYLQADFKAAAAAVGHPEWEFPNDVGQYNDTPERTQFFRDNGTYLSEKGRFFLAWYSNNLIKHGDRILDEANKVFLGYKVQLAIKISGIHWWYKVPSHAAELTAGYYNLHDRDGYRTIARMLKRHRASINFTCAEMRDLEQSSQAMSAPEELVQQVLSAGWREGLNVACENALPRYDPTAYNTILRNARPHGINQSGPPEHKLFGFTYLRLSNQLVEGQNYVNFKTFVDRMHANLPRDPYVDPMAPLPRSGPEISIEMILQAAQPKLQPFPFQEHTDLPVGPTGGMGGQAEGPTCGMGGQVKGPTGGMGGQAEDPTSGIGGELPATM</sequence>
<evidence type="ECO:0000250" key="1">
    <source>
        <dbReference type="UniProtKB" id="P10538"/>
    </source>
</evidence>
<evidence type="ECO:0000255" key="2">
    <source>
        <dbReference type="PROSITE-ProRule" id="PRU10050"/>
    </source>
</evidence>
<evidence type="ECO:0000256" key="3">
    <source>
        <dbReference type="SAM" id="MobiDB-lite"/>
    </source>
</evidence>
<evidence type="ECO:0000305" key="4"/>
<evidence type="ECO:0007829" key="5">
    <source>
        <dbReference type="PDB" id="1B1Y"/>
    </source>
</evidence>
<evidence type="ECO:0007829" key="6">
    <source>
        <dbReference type="PDB" id="2XFF"/>
    </source>
</evidence>
<evidence type="ECO:0007829" key="7">
    <source>
        <dbReference type="PDB" id="2XFR"/>
    </source>
</evidence>
<evidence type="ECO:0007829" key="8">
    <source>
        <dbReference type="PDB" id="2XGB"/>
    </source>
</evidence>
<organism>
    <name type="scientific">Hordeum vulgare</name>
    <name type="common">Barley</name>
    <dbReference type="NCBI Taxonomy" id="4513"/>
    <lineage>
        <taxon>Eukaryota</taxon>
        <taxon>Viridiplantae</taxon>
        <taxon>Streptophyta</taxon>
        <taxon>Embryophyta</taxon>
        <taxon>Tracheophyta</taxon>
        <taxon>Spermatophyta</taxon>
        <taxon>Magnoliopsida</taxon>
        <taxon>Liliopsida</taxon>
        <taxon>Poales</taxon>
        <taxon>Poaceae</taxon>
        <taxon>BOP clade</taxon>
        <taxon>Pooideae</taxon>
        <taxon>Triticodae</taxon>
        <taxon>Triticeae</taxon>
        <taxon>Hordeinae</taxon>
        <taxon>Hordeum</taxon>
    </lineage>
</organism>
<gene>
    <name type="primary">BMY1</name>
    <name type="synonym">AMYB</name>
</gene>
<name>AMYB_HORVU</name>
<accession>P16098</accession>
<proteinExistence type="evidence at protein level"/>
<comment type="catalytic activity">
    <reaction>
        <text>Hydrolysis of (1-&gt;4)-alpha-D-glucosidic linkages in polysaccharides so as to remove successive maltose units from the non-reducing ends of the chains.</text>
        <dbReference type="EC" id="3.2.1.2"/>
    </reaction>
</comment>
<comment type="subunit">
    <text>Monomer.</text>
</comment>
<comment type="interaction">
    <interactant intactId="EBI-7799617">
        <id>P16098</id>
    </interactant>
    <interactant intactId="EBI-7799617">
        <id>P16098</id>
        <label>BMY1</label>
    </interactant>
    <organismsDiffer>false</organismsDiffer>
    <experiments>4</experiments>
</comment>
<comment type="similarity">
    <text evidence="4">Belongs to the glycosyl hydrolase 14 family.</text>
</comment>
<reference key="1">
    <citation type="journal article" date="1987" name="Eur. J. Biochem.">
        <title>Primary structure and differential expression of beta-amylase in normal and mutant barleys.</title>
        <authorList>
            <person name="Kreis M."/>
            <person name="Williamson M."/>
            <person name="Buxton B."/>
            <person name="Pywell J."/>
            <person name="Hejgaard J."/>
            <person name="Svendsen I."/>
        </authorList>
    </citation>
    <scope>NUCLEOTIDE SEQUENCE [MRNA]</scope>
    <scope>PARTIAL PROTEIN SEQUENCE</scope>
    <source>
        <tissue>Endosperm</tissue>
    </source>
</reference>
<reference key="2">
    <citation type="journal article" date="1995" name="Biosci. Biotechnol. Biochem.">
        <title>A structural gene encoding beta-amylase of barley.</title>
        <authorList>
            <person name="Yoshigi N."/>
            <person name="Okada Y."/>
            <person name="Sahara H."/>
            <person name="Tamaki T."/>
        </authorList>
    </citation>
    <scope>NUCLEOTIDE SEQUENCE [GENOMIC DNA]</scope>
    <source>
        <strain>cv. Haruna Two-rows</strain>
    </source>
</reference>
<reference key="3">
    <citation type="journal article" date="1994" name="J. Biochem.">
        <title>PCR cloning and sequencing of the beta-amylase cDNA from barley.</title>
        <authorList>
            <person name="Yoshigi N."/>
            <person name="Okada Y."/>
            <person name="Sahara H."/>
            <person name="Koshino S."/>
        </authorList>
    </citation>
    <scope>NUCLEOTIDE SEQUENCE [MRNA]</scope>
    <source>
        <strain>cv. Haruna Two-rows</strain>
    </source>
</reference>
<reference key="4">
    <citation type="journal article" date="1999" name="J. Mol. Biol.">
        <title>The crystal structure of the sevenfold mutant of barley beta-amylase with increased thermostability at 2.5 A resolution.</title>
        <authorList>
            <person name="Mikami B."/>
            <person name="Yoon H.-J."/>
            <person name="Yoshigi N."/>
        </authorList>
    </citation>
    <scope>X-RAY CRYSTALLOGRAPHY (2.5 ANGSTROMS) OF 5-504</scope>
</reference>
<protein>
    <recommendedName>
        <fullName>Beta-amylase</fullName>
        <ecNumber>3.2.1.2</ecNumber>
    </recommendedName>
    <alternativeName>
        <fullName>1,4-alpha-D-glucan maltohydrolase</fullName>
    </alternativeName>
</protein>
<dbReference type="EC" id="3.2.1.2"/>
<dbReference type="EMBL" id="X52321">
    <property type="protein sequence ID" value="CAA36556.1"/>
    <property type="molecule type" value="mRNA"/>
</dbReference>
<dbReference type="EMBL" id="D49999">
    <property type="protein sequence ID" value="BAA08741.1"/>
    <property type="molecule type" value="Genomic_DNA"/>
</dbReference>
<dbReference type="EMBL" id="D21349">
    <property type="protein sequence ID" value="BAA04815.1"/>
    <property type="molecule type" value="mRNA"/>
</dbReference>
<dbReference type="PIR" id="S00222">
    <property type="entry name" value="S00222"/>
</dbReference>
<dbReference type="PDB" id="1B1Y">
    <property type="method" value="X-ray"/>
    <property type="resolution" value="2.50 A"/>
    <property type="chains" value="A=6-504"/>
</dbReference>
<dbReference type="PDB" id="2XFF">
    <property type="method" value="X-ray"/>
    <property type="resolution" value="1.31 A"/>
    <property type="chains" value="A=1-535"/>
</dbReference>
<dbReference type="PDB" id="2XFR">
    <property type="method" value="X-ray"/>
    <property type="resolution" value="0.97 A"/>
    <property type="chains" value="A=1-535"/>
</dbReference>
<dbReference type="PDB" id="2XFY">
    <property type="method" value="X-ray"/>
    <property type="resolution" value="1.21 A"/>
    <property type="chains" value="A=1-535"/>
</dbReference>
<dbReference type="PDB" id="2XG9">
    <property type="method" value="X-ray"/>
    <property type="resolution" value="1.80 A"/>
    <property type="chains" value="A=1-535"/>
</dbReference>
<dbReference type="PDB" id="2XGB">
    <property type="method" value="X-ray"/>
    <property type="resolution" value="1.20 A"/>
    <property type="chains" value="A=1-535"/>
</dbReference>
<dbReference type="PDB" id="2XGI">
    <property type="method" value="X-ray"/>
    <property type="resolution" value="1.30 A"/>
    <property type="chains" value="A=1-535"/>
</dbReference>
<dbReference type="PDBsum" id="1B1Y"/>
<dbReference type="PDBsum" id="2XFF"/>
<dbReference type="PDBsum" id="2XFR"/>
<dbReference type="PDBsum" id="2XFY"/>
<dbReference type="PDBsum" id="2XG9"/>
<dbReference type="PDBsum" id="2XGB"/>
<dbReference type="PDBsum" id="2XGI"/>
<dbReference type="SMR" id="P16098"/>
<dbReference type="MINT" id="P16098"/>
<dbReference type="BindingDB" id="P16098"/>
<dbReference type="ChEMBL" id="CHEMBL4371"/>
<dbReference type="Allergome" id="420">
    <property type="allergen name" value="Hor v 17"/>
</dbReference>
<dbReference type="CAZy" id="GH14">
    <property type="family name" value="Glycoside Hydrolase Family 14"/>
</dbReference>
<dbReference type="BRENDA" id="3.2.1.2">
    <property type="organism ID" value="2687"/>
</dbReference>
<dbReference type="EvolutionaryTrace" id="P16098"/>
<dbReference type="ExpressionAtlas" id="P16098">
    <property type="expression patterns" value="baseline and differential"/>
</dbReference>
<dbReference type="GO" id="GO:0016161">
    <property type="term" value="F:beta-amylase activity"/>
    <property type="evidence" value="ECO:0007669"/>
    <property type="project" value="UniProtKB-EC"/>
</dbReference>
<dbReference type="GO" id="GO:0042802">
    <property type="term" value="F:identical protein binding"/>
    <property type="evidence" value="ECO:0000353"/>
    <property type="project" value="IntAct"/>
</dbReference>
<dbReference type="GO" id="GO:0000272">
    <property type="term" value="P:polysaccharide catabolic process"/>
    <property type="evidence" value="ECO:0007669"/>
    <property type="project" value="UniProtKB-KW"/>
</dbReference>
<dbReference type="FunFam" id="3.20.20.80:FF:000066">
    <property type="entry name" value="Beta-amylase"/>
    <property type="match status" value="1"/>
</dbReference>
<dbReference type="Gene3D" id="3.20.20.80">
    <property type="entry name" value="Glycosidases"/>
    <property type="match status" value="1"/>
</dbReference>
<dbReference type="InterPro" id="IPR001554">
    <property type="entry name" value="Glyco_hydro_14"/>
</dbReference>
<dbReference type="InterPro" id="IPR018238">
    <property type="entry name" value="Glyco_hydro_14_CS"/>
</dbReference>
<dbReference type="InterPro" id="IPR001371">
    <property type="entry name" value="Glyco_hydro_14B_pln"/>
</dbReference>
<dbReference type="InterPro" id="IPR017853">
    <property type="entry name" value="Glycoside_hydrolase_SF"/>
</dbReference>
<dbReference type="PANTHER" id="PTHR31352:SF39">
    <property type="entry name" value="BETA-AMYLASE"/>
    <property type="match status" value="1"/>
</dbReference>
<dbReference type="PANTHER" id="PTHR31352">
    <property type="entry name" value="BETA-AMYLASE 1, CHLOROPLASTIC"/>
    <property type="match status" value="1"/>
</dbReference>
<dbReference type="Pfam" id="PF01373">
    <property type="entry name" value="Glyco_hydro_14"/>
    <property type="match status" value="1"/>
</dbReference>
<dbReference type="PRINTS" id="PR00750">
    <property type="entry name" value="BETAAMYLASE"/>
</dbReference>
<dbReference type="PRINTS" id="PR00842">
    <property type="entry name" value="GLHYDLASE14B"/>
</dbReference>
<dbReference type="SUPFAM" id="SSF51445">
    <property type="entry name" value="(Trans)glycosidases"/>
    <property type="match status" value="1"/>
</dbReference>
<dbReference type="PROSITE" id="PS00506">
    <property type="entry name" value="BETA_AMYLASE_1"/>
    <property type="match status" value="1"/>
</dbReference>
<dbReference type="PROSITE" id="PS00679">
    <property type="entry name" value="BETA_AMYLASE_2"/>
    <property type="match status" value="1"/>
</dbReference>
<keyword id="KW-0002">3D-structure</keyword>
<keyword id="KW-0119">Carbohydrate metabolism</keyword>
<keyword id="KW-0903">Direct protein sequencing</keyword>
<keyword id="KW-0326">Glycosidase</keyword>
<keyword id="KW-0378">Hydrolase</keyword>
<keyword id="KW-0624">Polysaccharide degradation</keyword>
<keyword id="KW-0677">Repeat</keyword>